<keyword id="KW-0501">Molybdenum cofactor biosynthesis</keyword>
<keyword id="KW-1185">Reference proteome</keyword>
<keyword id="KW-0808">Transferase</keyword>
<dbReference type="EC" id="2.8.1.12"/>
<dbReference type="EMBL" id="AE005673">
    <property type="protein sequence ID" value="AAK22004.1"/>
    <property type="molecule type" value="Genomic_DNA"/>
</dbReference>
<dbReference type="PIR" id="H87250">
    <property type="entry name" value="H87250"/>
</dbReference>
<dbReference type="RefSeq" id="NP_418836.1">
    <property type="nucleotide sequence ID" value="NC_002696.2"/>
</dbReference>
<dbReference type="RefSeq" id="WP_010917906.1">
    <property type="nucleotide sequence ID" value="NC_002696.2"/>
</dbReference>
<dbReference type="SMR" id="Q9AC50"/>
<dbReference type="STRING" id="190650.CC_0016"/>
<dbReference type="EnsemblBacteria" id="AAK22004">
    <property type="protein sequence ID" value="AAK22004"/>
    <property type="gene ID" value="CC_0016"/>
</dbReference>
<dbReference type="KEGG" id="ccr:CC_0016"/>
<dbReference type="PATRIC" id="fig|190650.5.peg.17"/>
<dbReference type="eggNOG" id="COG0314">
    <property type="taxonomic scope" value="Bacteria"/>
</dbReference>
<dbReference type="HOGENOM" id="CLU_089568_2_1_5"/>
<dbReference type="BioCyc" id="CAULO:CC0016-MONOMER"/>
<dbReference type="UniPathway" id="UPA00344"/>
<dbReference type="Proteomes" id="UP000001816">
    <property type="component" value="Chromosome"/>
</dbReference>
<dbReference type="GO" id="GO:0030366">
    <property type="term" value="F:molybdopterin synthase activity"/>
    <property type="evidence" value="ECO:0007669"/>
    <property type="project" value="UniProtKB-EC"/>
</dbReference>
<dbReference type="GO" id="GO:0006777">
    <property type="term" value="P:Mo-molybdopterin cofactor biosynthetic process"/>
    <property type="evidence" value="ECO:0007669"/>
    <property type="project" value="UniProtKB-KW"/>
</dbReference>
<dbReference type="CDD" id="cd00756">
    <property type="entry name" value="MoaE"/>
    <property type="match status" value="1"/>
</dbReference>
<dbReference type="Gene3D" id="3.90.1170.40">
    <property type="entry name" value="Molybdopterin biosynthesis MoaE subunit"/>
    <property type="match status" value="1"/>
</dbReference>
<dbReference type="InterPro" id="IPR036563">
    <property type="entry name" value="MoaE_sf"/>
</dbReference>
<dbReference type="InterPro" id="IPR003448">
    <property type="entry name" value="Mopterin_biosynth_MoaE"/>
</dbReference>
<dbReference type="PANTHER" id="PTHR23404">
    <property type="entry name" value="MOLYBDOPTERIN SYNTHASE RELATED"/>
    <property type="match status" value="1"/>
</dbReference>
<dbReference type="Pfam" id="PF02391">
    <property type="entry name" value="MoaE"/>
    <property type="match status" value="1"/>
</dbReference>
<dbReference type="SUPFAM" id="SSF54690">
    <property type="entry name" value="Molybdopterin synthase subunit MoaE"/>
    <property type="match status" value="1"/>
</dbReference>
<proteinExistence type="inferred from homology"/>
<accession>Q9AC50</accession>
<protein>
    <recommendedName>
        <fullName>Molybdopterin synthase catalytic subunit</fullName>
        <ecNumber>2.8.1.12</ecNumber>
    </recommendedName>
    <alternativeName>
        <fullName>MPT synthase subunit 2</fullName>
    </alternativeName>
    <alternativeName>
        <fullName>Molybdenum cofactor biosynthesis protein E</fullName>
    </alternativeName>
    <alternativeName>
        <fullName>Molybdopterin-converting factor large subunit</fullName>
    </alternativeName>
    <alternativeName>
        <fullName>Molybdopterin-converting factor subunit 2</fullName>
    </alternativeName>
</protein>
<reference key="1">
    <citation type="journal article" date="2001" name="Proc. Natl. Acad. Sci. U.S.A.">
        <title>Complete genome sequence of Caulobacter crescentus.</title>
        <authorList>
            <person name="Nierman W.C."/>
            <person name="Feldblyum T.V."/>
            <person name="Laub M.T."/>
            <person name="Paulsen I.T."/>
            <person name="Nelson K.E."/>
            <person name="Eisen J.A."/>
            <person name="Heidelberg J.F."/>
            <person name="Alley M.R.K."/>
            <person name="Ohta N."/>
            <person name="Maddock J.R."/>
            <person name="Potocka I."/>
            <person name="Nelson W.C."/>
            <person name="Newton A."/>
            <person name="Stephens C."/>
            <person name="Phadke N.D."/>
            <person name="Ely B."/>
            <person name="DeBoy R.T."/>
            <person name="Dodson R.J."/>
            <person name="Durkin A.S."/>
            <person name="Gwinn M.L."/>
            <person name="Haft D.H."/>
            <person name="Kolonay J.F."/>
            <person name="Smit J."/>
            <person name="Craven M.B."/>
            <person name="Khouri H.M."/>
            <person name="Shetty J."/>
            <person name="Berry K.J."/>
            <person name="Utterback T.R."/>
            <person name="Tran K."/>
            <person name="Wolf A.M."/>
            <person name="Vamathevan J.J."/>
            <person name="Ermolaeva M.D."/>
            <person name="White O."/>
            <person name="Salzberg S.L."/>
            <person name="Venter J.C."/>
            <person name="Shapiro L."/>
            <person name="Fraser C.M."/>
        </authorList>
    </citation>
    <scope>NUCLEOTIDE SEQUENCE [LARGE SCALE GENOMIC DNA]</scope>
    <source>
        <strain>ATCC 19089 / CIP 103742 / CB 15</strain>
    </source>
</reference>
<feature type="chain" id="PRO_0000163081" description="Molybdopterin synthase catalytic subunit">
    <location>
        <begin position="1"/>
        <end position="150"/>
    </location>
</feature>
<feature type="region of interest" description="Disordered" evidence="2">
    <location>
        <begin position="124"/>
        <end position="150"/>
    </location>
</feature>
<feature type="compositionally biased region" description="Basic and acidic residues" evidence="2">
    <location>
        <begin position="136"/>
        <end position="150"/>
    </location>
</feature>
<feature type="binding site" evidence="1">
    <location>
        <begin position="35"/>
        <end position="37"/>
    </location>
    <ligand>
        <name>substrate</name>
    </ligand>
</feature>
<feature type="binding site" evidence="1">
    <location>
        <begin position="99"/>
        <end position="100"/>
    </location>
    <ligand>
        <name>substrate</name>
    </ligand>
</feature>
<feature type="binding site" evidence="1">
    <location>
        <position position="115"/>
    </location>
    <ligand>
        <name>substrate</name>
    </ligand>
</feature>
<feature type="binding site" evidence="1">
    <location>
        <begin position="122"/>
        <end position="124"/>
    </location>
    <ligand>
        <name>substrate</name>
    </ligand>
</feature>
<name>MOAE_CAUVC</name>
<gene>
    <name type="primary">moaE</name>
    <name type="ordered locus">CC_0016</name>
</gene>
<comment type="function">
    <text evidence="1">Converts molybdopterin precursor Z into molybdopterin. This requires the incorporation of two sulfur atoms into precursor Z to generate a dithiolene group. The sulfur is provided by MoaD (By similarity).</text>
</comment>
<comment type="catalytic activity">
    <reaction>
        <text>2 [molybdopterin-synthase sulfur-carrier protein]-C-terminal-Gly-aminoethanethioate + cyclic pyranopterin phosphate + H2O = molybdopterin + 2 [molybdopterin-synthase sulfur-carrier protein]-C-terminal Gly-Gly + 2 H(+)</text>
        <dbReference type="Rhea" id="RHEA:26333"/>
        <dbReference type="Rhea" id="RHEA-COMP:12202"/>
        <dbReference type="Rhea" id="RHEA-COMP:19907"/>
        <dbReference type="ChEBI" id="CHEBI:15377"/>
        <dbReference type="ChEBI" id="CHEBI:15378"/>
        <dbReference type="ChEBI" id="CHEBI:58698"/>
        <dbReference type="ChEBI" id="CHEBI:59648"/>
        <dbReference type="ChEBI" id="CHEBI:90778"/>
        <dbReference type="ChEBI" id="CHEBI:232372"/>
        <dbReference type="EC" id="2.8.1.12"/>
    </reaction>
</comment>
<comment type="pathway">
    <text>Cofactor biosynthesis; molybdopterin biosynthesis.</text>
</comment>
<comment type="subunit">
    <text evidence="1">Heterotetramer of 2 MoaD subunits and 2 MoaE subunits. Also stable as homodimer. The enzyme changes between these two forms during catalysis (By similarity).</text>
</comment>
<comment type="similarity">
    <text evidence="3">Belongs to the MoaE family.</text>
</comment>
<sequence length="150" mass="16427">MIVTLTDQPFEPGVLVSAFCAGREETGAVATFIGLARAEQGAARALELEAYPGFTDAAITEIAQGAVTRFALQDVHIVHRVGVIAPGEAIVFVATAAAHRREAFEACDYLMDYLKSRAPFWKKEHGPEGPRWIEPTARDRTDAQRWDQEA</sequence>
<organism>
    <name type="scientific">Caulobacter vibrioides (strain ATCC 19089 / CIP 103742 / CB 15)</name>
    <name type="common">Caulobacter crescentus</name>
    <dbReference type="NCBI Taxonomy" id="190650"/>
    <lineage>
        <taxon>Bacteria</taxon>
        <taxon>Pseudomonadati</taxon>
        <taxon>Pseudomonadota</taxon>
        <taxon>Alphaproteobacteria</taxon>
        <taxon>Caulobacterales</taxon>
        <taxon>Caulobacteraceae</taxon>
        <taxon>Caulobacter</taxon>
    </lineage>
</organism>
<evidence type="ECO:0000250" key="1"/>
<evidence type="ECO:0000256" key="2">
    <source>
        <dbReference type="SAM" id="MobiDB-lite"/>
    </source>
</evidence>
<evidence type="ECO:0000305" key="3"/>